<protein>
    <recommendedName>
        <fullName evidence="1">Succinyl-diaminopimelate desuccinylase</fullName>
        <shortName evidence="1">SDAP desuccinylase</shortName>
        <ecNumber evidence="1">3.5.1.18</ecNumber>
    </recommendedName>
    <alternativeName>
        <fullName evidence="1">N-succinyl-LL-2,6-diaminoheptanedioate amidohydrolase</fullName>
    </alternativeName>
</protein>
<keyword id="KW-0028">Amino-acid biosynthesis</keyword>
<keyword id="KW-0170">Cobalt</keyword>
<keyword id="KW-0220">Diaminopimelate biosynthesis</keyword>
<keyword id="KW-0378">Hydrolase</keyword>
<keyword id="KW-0457">Lysine biosynthesis</keyword>
<keyword id="KW-0479">Metal-binding</keyword>
<keyword id="KW-1185">Reference proteome</keyword>
<keyword id="KW-0862">Zinc</keyword>
<sequence length="384" mass="41525">MTDAAHSSQTGPVTELTKALIARPSVTPLDEGCQTLMAERLAAIGFNIEAMVFEDTTNMWARRGNTGPVFCFAGHTDVVPTGDLSRWHTPPFEPTIIDGYLYGRGAADMKGSLAAMVVATERFVAKHPNHPGSIAFLITSDEEGPFINGTTRVIDTLEARNEKITWALVGEPSSTLKLGDVVKNGRRGSLTANLTVKGVQGHVAYPHLADNPIHKAAPFLAELSQTHWDNGNAFFPPTSMQIANINGGTGASNVIPGALEVMFNFRYSTEVTAEILIERVETLLTAHELDYDIRWTFNGLPFLTGEGPLLDATRHAIRQVTGYDTDPQTTGGTSDGRFIAPTGAKVLELGPVNATIHKVNECVKVDDLEQLALCYEVILEQLLC</sequence>
<reference key="1">
    <citation type="journal article" date="2002" name="Nat. Biotechnol.">
        <title>Genome sequence of the dissimilatory metal ion-reducing bacterium Shewanella oneidensis.</title>
        <authorList>
            <person name="Heidelberg J.F."/>
            <person name="Paulsen I.T."/>
            <person name="Nelson K.E."/>
            <person name="Gaidos E.J."/>
            <person name="Nelson W.C."/>
            <person name="Read T.D."/>
            <person name="Eisen J.A."/>
            <person name="Seshadri R."/>
            <person name="Ward N.L."/>
            <person name="Methe B.A."/>
            <person name="Clayton R.A."/>
            <person name="Meyer T."/>
            <person name="Tsapin A."/>
            <person name="Scott J."/>
            <person name="Beanan M.J."/>
            <person name="Brinkac L.M."/>
            <person name="Daugherty S.C."/>
            <person name="DeBoy R.T."/>
            <person name="Dodson R.J."/>
            <person name="Durkin A.S."/>
            <person name="Haft D.H."/>
            <person name="Kolonay J.F."/>
            <person name="Madupu R."/>
            <person name="Peterson J.D."/>
            <person name="Umayam L.A."/>
            <person name="White O."/>
            <person name="Wolf A.M."/>
            <person name="Vamathevan J.J."/>
            <person name="Weidman J.F."/>
            <person name="Impraim M."/>
            <person name="Lee K."/>
            <person name="Berry K.J."/>
            <person name="Lee C."/>
            <person name="Mueller J."/>
            <person name="Khouri H.M."/>
            <person name="Gill J."/>
            <person name="Utterback T.R."/>
            <person name="McDonald L.A."/>
            <person name="Feldblyum T.V."/>
            <person name="Smith H.O."/>
            <person name="Venter J.C."/>
            <person name="Nealson K.H."/>
            <person name="Fraser C.M."/>
        </authorList>
    </citation>
    <scope>NUCLEOTIDE SEQUENCE [LARGE SCALE GENOMIC DNA]</scope>
    <source>
        <strain>ATCC 700550 / JCM 31522 / CIP 106686 / LMG 19005 / NCIMB 14063 / MR-1</strain>
    </source>
</reference>
<dbReference type="EC" id="3.5.1.18" evidence="1"/>
<dbReference type="EMBL" id="AE014299">
    <property type="protein sequence ID" value="AAN55502.1"/>
    <property type="molecule type" value="Genomic_DNA"/>
</dbReference>
<dbReference type="RefSeq" id="NP_718058.1">
    <property type="nucleotide sequence ID" value="NC_004347.2"/>
</dbReference>
<dbReference type="RefSeq" id="WP_011072438.1">
    <property type="nucleotide sequence ID" value="NC_004347.2"/>
</dbReference>
<dbReference type="SMR" id="Q8EEB6"/>
<dbReference type="STRING" id="211586.SO_2471"/>
<dbReference type="PaxDb" id="211586-SO_2471"/>
<dbReference type="KEGG" id="son:SO_2471"/>
<dbReference type="PATRIC" id="fig|211586.12.peg.2380"/>
<dbReference type="eggNOG" id="COG0624">
    <property type="taxonomic scope" value="Bacteria"/>
</dbReference>
<dbReference type="HOGENOM" id="CLU_021802_4_0_6"/>
<dbReference type="OrthoDB" id="9809784at2"/>
<dbReference type="PhylomeDB" id="Q8EEB6"/>
<dbReference type="BioCyc" id="SONE211586:G1GMP-2258-MONOMER"/>
<dbReference type="UniPathway" id="UPA00034">
    <property type="reaction ID" value="UER00021"/>
</dbReference>
<dbReference type="Proteomes" id="UP000008186">
    <property type="component" value="Chromosome"/>
</dbReference>
<dbReference type="GO" id="GO:0005829">
    <property type="term" value="C:cytosol"/>
    <property type="evidence" value="ECO:0000318"/>
    <property type="project" value="GO_Central"/>
</dbReference>
<dbReference type="GO" id="GO:0050897">
    <property type="term" value="F:cobalt ion binding"/>
    <property type="evidence" value="ECO:0007669"/>
    <property type="project" value="UniProtKB-UniRule"/>
</dbReference>
<dbReference type="GO" id="GO:0009014">
    <property type="term" value="F:succinyl-diaminopimelate desuccinylase activity"/>
    <property type="evidence" value="ECO:0000318"/>
    <property type="project" value="GO_Central"/>
</dbReference>
<dbReference type="GO" id="GO:0008270">
    <property type="term" value="F:zinc ion binding"/>
    <property type="evidence" value="ECO:0007669"/>
    <property type="project" value="UniProtKB-UniRule"/>
</dbReference>
<dbReference type="GO" id="GO:0019877">
    <property type="term" value="P:diaminopimelate biosynthetic process"/>
    <property type="evidence" value="ECO:0007669"/>
    <property type="project" value="UniProtKB-UniRule"/>
</dbReference>
<dbReference type="GO" id="GO:0009089">
    <property type="term" value="P:lysine biosynthetic process via diaminopimelate"/>
    <property type="evidence" value="ECO:0000318"/>
    <property type="project" value="GO_Central"/>
</dbReference>
<dbReference type="CDD" id="cd03891">
    <property type="entry name" value="M20_DapE_proteobac"/>
    <property type="match status" value="1"/>
</dbReference>
<dbReference type="FunFam" id="3.30.70.360:FF:000011">
    <property type="entry name" value="Succinyl-diaminopimelate desuccinylase"/>
    <property type="match status" value="1"/>
</dbReference>
<dbReference type="FunFam" id="3.40.630.10:FF:000005">
    <property type="entry name" value="Succinyl-diaminopimelate desuccinylase"/>
    <property type="match status" value="1"/>
</dbReference>
<dbReference type="FunFam" id="3.40.630.10:FF:000192">
    <property type="entry name" value="Succinyl-diaminopimelate desuccinylase"/>
    <property type="match status" value="1"/>
</dbReference>
<dbReference type="Gene3D" id="3.40.630.10">
    <property type="entry name" value="Zn peptidases"/>
    <property type="match status" value="2"/>
</dbReference>
<dbReference type="HAMAP" id="MF_01690">
    <property type="entry name" value="DapE"/>
    <property type="match status" value="1"/>
</dbReference>
<dbReference type="InterPro" id="IPR001261">
    <property type="entry name" value="ArgE/DapE_CS"/>
</dbReference>
<dbReference type="InterPro" id="IPR036264">
    <property type="entry name" value="Bact_exopeptidase_dim_dom"/>
</dbReference>
<dbReference type="InterPro" id="IPR005941">
    <property type="entry name" value="DapE_proteobac"/>
</dbReference>
<dbReference type="InterPro" id="IPR002933">
    <property type="entry name" value="Peptidase_M20"/>
</dbReference>
<dbReference type="InterPro" id="IPR011650">
    <property type="entry name" value="Peptidase_M20_dimer"/>
</dbReference>
<dbReference type="InterPro" id="IPR050072">
    <property type="entry name" value="Peptidase_M20A"/>
</dbReference>
<dbReference type="NCBIfam" id="TIGR01246">
    <property type="entry name" value="dapE_proteo"/>
    <property type="match status" value="1"/>
</dbReference>
<dbReference type="NCBIfam" id="NF009557">
    <property type="entry name" value="PRK13009.1"/>
    <property type="match status" value="1"/>
</dbReference>
<dbReference type="PANTHER" id="PTHR43808">
    <property type="entry name" value="ACETYLORNITHINE DEACETYLASE"/>
    <property type="match status" value="1"/>
</dbReference>
<dbReference type="PANTHER" id="PTHR43808:SF31">
    <property type="entry name" value="N-ACETYL-L-CITRULLINE DEACETYLASE"/>
    <property type="match status" value="1"/>
</dbReference>
<dbReference type="Pfam" id="PF07687">
    <property type="entry name" value="M20_dimer"/>
    <property type="match status" value="1"/>
</dbReference>
<dbReference type="Pfam" id="PF01546">
    <property type="entry name" value="Peptidase_M20"/>
    <property type="match status" value="1"/>
</dbReference>
<dbReference type="SUPFAM" id="SSF55031">
    <property type="entry name" value="Bacterial exopeptidase dimerisation domain"/>
    <property type="match status" value="1"/>
</dbReference>
<dbReference type="SUPFAM" id="SSF53187">
    <property type="entry name" value="Zn-dependent exopeptidases"/>
    <property type="match status" value="1"/>
</dbReference>
<dbReference type="PROSITE" id="PS00759">
    <property type="entry name" value="ARGE_DAPE_CPG2_2"/>
    <property type="match status" value="1"/>
</dbReference>
<name>DAPE_SHEON</name>
<gene>
    <name evidence="1" type="primary">dapE</name>
    <name type="ordered locus">SO_2471</name>
</gene>
<proteinExistence type="inferred from homology"/>
<comment type="function">
    <text evidence="1">Catalyzes the hydrolysis of N-succinyl-L,L-diaminopimelic acid (SDAP), forming succinate and LL-2,6-diaminopimelate (DAP), an intermediate involved in the bacterial biosynthesis of lysine and meso-diaminopimelic acid, an essential component of bacterial cell walls.</text>
</comment>
<comment type="catalytic activity">
    <reaction evidence="1">
        <text>N-succinyl-(2S,6S)-2,6-diaminopimelate + H2O = (2S,6S)-2,6-diaminopimelate + succinate</text>
        <dbReference type="Rhea" id="RHEA:22608"/>
        <dbReference type="ChEBI" id="CHEBI:15377"/>
        <dbReference type="ChEBI" id="CHEBI:30031"/>
        <dbReference type="ChEBI" id="CHEBI:57609"/>
        <dbReference type="ChEBI" id="CHEBI:58087"/>
        <dbReference type="EC" id="3.5.1.18"/>
    </reaction>
</comment>
<comment type="cofactor">
    <cofactor evidence="1">
        <name>Zn(2+)</name>
        <dbReference type="ChEBI" id="CHEBI:29105"/>
    </cofactor>
    <cofactor evidence="1">
        <name>Co(2+)</name>
        <dbReference type="ChEBI" id="CHEBI:48828"/>
    </cofactor>
    <text evidence="1">Binds 2 Zn(2+) or Co(2+) ions per subunit.</text>
</comment>
<comment type="pathway">
    <text evidence="1">Amino-acid biosynthesis; L-lysine biosynthesis via DAP pathway; LL-2,6-diaminopimelate from (S)-tetrahydrodipicolinate (succinylase route): step 3/3.</text>
</comment>
<comment type="subunit">
    <text evidence="1">Homodimer.</text>
</comment>
<comment type="similarity">
    <text evidence="1">Belongs to the peptidase M20A family. DapE subfamily.</text>
</comment>
<organism>
    <name type="scientific">Shewanella oneidensis (strain ATCC 700550 / JCM 31522 / CIP 106686 / LMG 19005 / NCIMB 14063 / MR-1)</name>
    <dbReference type="NCBI Taxonomy" id="211586"/>
    <lineage>
        <taxon>Bacteria</taxon>
        <taxon>Pseudomonadati</taxon>
        <taxon>Pseudomonadota</taxon>
        <taxon>Gammaproteobacteria</taxon>
        <taxon>Alteromonadales</taxon>
        <taxon>Shewanellaceae</taxon>
        <taxon>Shewanella</taxon>
    </lineage>
</organism>
<evidence type="ECO:0000255" key="1">
    <source>
        <dbReference type="HAMAP-Rule" id="MF_01690"/>
    </source>
</evidence>
<feature type="chain" id="PRO_0000375735" description="Succinyl-diaminopimelate desuccinylase">
    <location>
        <begin position="1"/>
        <end position="384"/>
    </location>
</feature>
<feature type="active site" evidence="1">
    <location>
        <position position="77"/>
    </location>
</feature>
<feature type="active site" description="Proton acceptor" evidence="1">
    <location>
        <position position="142"/>
    </location>
</feature>
<feature type="binding site" evidence="1">
    <location>
        <position position="75"/>
    </location>
    <ligand>
        <name>Zn(2+)</name>
        <dbReference type="ChEBI" id="CHEBI:29105"/>
        <label>1</label>
    </ligand>
</feature>
<feature type="binding site" evidence="1">
    <location>
        <position position="108"/>
    </location>
    <ligand>
        <name>Zn(2+)</name>
        <dbReference type="ChEBI" id="CHEBI:29105"/>
        <label>1</label>
    </ligand>
</feature>
<feature type="binding site" evidence="1">
    <location>
        <position position="108"/>
    </location>
    <ligand>
        <name>Zn(2+)</name>
        <dbReference type="ChEBI" id="CHEBI:29105"/>
        <label>2</label>
    </ligand>
</feature>
<feature type="binding site" evidence="1">
    <location>
        <position position="143"/>
    </location>
    <ligand>
        <name>Zn(2+)</name>
        <dbReference type="ChEBI" id="CHEBI:29105"/>
        <label>2</label>
    </ligand>
</feature>
<feature type="binding site" evidence="1">
    <location>
        <position position="171"/>
    </location>
    <ligand>
        <name>Zn(2+)</name>
        <dbReference type="ChEBI" id="CHEBI:29105"/>
        <label>1</label>
    </ligand>
</feature>
<feature type="binding site" evidence="1">
    <location>
        <position position="357"/>
    </location>
    <ligand>
        <name>Zn(2+)</name>
        <dbReference type="ChEBI" id="CHEBI:29105"/>
        <label>2</label>
    </ligand>
</feature>
<accession>Q8EEB6</accession>